<gene>
    <name type="primary">Vps37b</name>
</gene>
<proteinExistence type="evidence at protein level"/>
<name>VP37B_MOUSE</name>
<accession>Q8R0J7</accession>
<accession>Q3TLR2</accession>
<accession>Q3UDW1</accession>
<feature type="chain" id="PRO_0000287201" description="Vacuolar protein sorting-associated protein 37B">
    <location>
        <begin position="1"/>
        <end position="285"/>
    </location>
</feature>
<feature type="domain" description="VPS37 C-terminal" evidence="2">
    <location>
        <begin position="84"/>
        <end position="173"/>
    </location>
</feature>
<feature type="region of interest" description="Interaction with IST1" evidence="1">
    <location>
        <begin position="50"/>
        <end position="170"/>
    </location>
</feature>
<feature type="region of interest" description="Disordered" evidence="3">
    <location>
        <begin position="167"/>
        <end position="215"/>
    </location>
</feature>
<feature type="region of interest" description="Disordered" evidence="3">
    <location>
        <begin position="242"/>
        <end position="285"/>
    </location>
</feature>
<feature type="compositionally biased region" description="Pro residues" evidence="3">
    <location>
        <begin position="173"/>
        <end position="184"/>
    </location>
</feature>
<feature type="compositionally biased region" description="Pro residues" evidence="3">
    <location>
        <begin position="206"/>
        <end position="215"/>
    </location>
</feature>
<feature type="compositionally biased region" description="Polar residues" evidence="3">
    <location>
        <begin position="250"/>
        <end position="259"/>
    </location>
</feature>
<feature type="compositionally biased region" description="Pro residues" evidence="3">
    <location>
        <begin position="262"/>
        <end position="275"/>
    </location>
</feature>
<feature type="compositionally biased region" description="Low complexity" evidence="3">
    <location>
        <begin position="276"/>
        <end position="285"/>
    </location>
</feature>
<feature type="sequence conflict" description="In Ref. 1; BAE38730." evidence="4" ref="1">
    <original>T</original>
    <variation>N</variation>
    <location>
        <position position="40"/>
    </location>
</feature>
<feature type="sequence conflict" description="In Ref. 1; BAE29150." evidence="4" ref="1">
    <original>I</original>
    <variation>V</variation>
    <location>
        <position position="89"/>
    </location>
</feature>
<reference key="1">
    <citation type="journal article" date="2005" name="Science">
        <title>The transcriptional landscape of the mammalian genome.</title>
        <authorList>
            <person name="Carninci P."/>
            <person name="Kasukawa T."/>
            <person name="Katayama S."/>
            <person name="Gough J."/>
            <person name="Frith M.C."/>
            <person name="Maeda N."/>
            <person name="Oyama R."/>
            <person name="Ravasi T."/>
            <person name="Lenhard B."/>
            <person name="Wells C."/>
            <person name="Kodzius R."/>
            <person name="Shimokawa K."/>
            <person name="Bajic V.B."/>
            <person name="Brenner S.E."/>
            <person name="Batalov S."/>
            <person name="Forrest A.R."/>
            <person name="Zavolan M."/>
            <person name="Davis M.J."/>
            <person name="Wilming L.G."/>
            <person name="Aidinis V."/>
            <person name="Allen J.E."/>
            <person name="Ambesi-Impiombato A."/>
            <person name="Apweiler R."/>
            <person name="Aturaliya R.N."/>
            <person name="Bailey T.L."/>
            <person name="Bansal M."/>
            <person name="Baxter L."/>
            <person name="Beisel K.W."/>
            <person name="Bersano T."/>
            <person name="Bono H."/>
            <person name="Chalk A.M."/>
            <person name="Chiu K.P."/>
            <person name="Choudhary V."/>
            <person name="Christoffels A."/>
            <person name="Clutterbuck D.R."/>
            <person name="Crowe M.L."/>
            <person name="Dalla E."/>
            <person name="Dalrymple B.P."/>
            <person name="de Bono B."/>
            <person name="Della Gatta G."/>
            <person name="di Bernardo D."/>
            <person name="Down T."/>
            <person name="Engstrom P."/>
            <person name="Fagiolini M."/>
            <person name="Faulkner G."/>
            <person name="Fletcher C.F."/>
            <person name="Fukushima T."/>
            <person name="Furuno M."/>
            <person name="Futaki S."/>
            <person name="Gariboldi M."/>
            <person name="Georgii-Hemming P."/>
            <person name="Gingeras T.R."/>
            <person name="Gojobori T."/>
            <person name="Green R.E."/>
            <person name="Gustincich S."/>
            <person name="Harbers M."/>
            <person name="Hayashi Y."/>
            <person name="Hensch T.K."/>
            <person name="Hirokawa N."/>
            <person name="Hill D."/>
            <person name="Huminiecki L."/>
            <person name="Iacono M."/>
            <person name="Ikeo K."/>
            <person name="Iwama A."/>
            <person name="Ishikawa T."/>
            <person name="Jakt M."/>
            <person name="Kanapin A."/>
            <person name="Katoh M."/>
            <person name="Kawasawa Y."/>
            <person name="Kelso J."/>
            <person name="Kitamura H."/>
            <person name="Kitano H."/>
            <person name="Kollias G."/>
            <person name="Krishnan S.P."/>
            <person name="Kruger A."/>
            <person name="Kummerfeld S.K."/>
            <person name="Kurochkin I.V."/>
            <person name="Lareau L.F."/>
            <person name="Lazarevic D."/>
            <person name="Lipovich L."/>
            <person name="Liu J."/>
            <person name="Liuni S."/>
            <person name="McWilliam S."/>
            <person name="Madan Babu M."/>
            <person name="Madera M."/>
            <person name="Marchionni L."/>
            <person name="Matsuda H."/>
            <person name="Matsuzawa S."/>
            <person name="Miki H."/>
            <person name="Mignone F."/>
            <person name="Miyake S."/>
            <person name="Morris K."/>
            <person name="Mottagui-Tabar S."/>
            <person name="Mulder N."/>
            <person name="Nakano N."/>
            <person name="Nakauchi H."/>
            <person name="Ng P."/>
            <person name="Nilsson R."/>
            <person name="Nishiguchi S."/>
            <person name="Nishikawa S."/>
            <person name="Nori F."/>
            <person name="Ohara O."/>
            <person name="Okazaki Y."/>
            <person name="Orlando V."/>
            <person name="Pang K.C."/>
            <person name="Pavan W.J."/>
            <person name="Pavesi G."/>
            <person name="Pesole G."/>
            <person name="Petrovsky N."/>
            <person name="Piazza S."/>
            <person name="Reed J."/>
            <person name="Reid J.F."/>
            <person name="Ring B.Z."/>
            <person name="Ringwald M."/>
            <person name="Rost B."/>
            <person name="Ruan Y."/>
            <person name="Salzberg S.L."/>
            <person name="Sandelin A."/>
            <person name="Schneider C."/>
            <person name="Schoenbach C."/>
            <person name="Sekiguchi K."/>
            <person name="Semple C.A."/>
            <person name="Seno S."/>
            <person name="Sessa L."/>
            <person name="Sheng Y."/>
            <person name="Shibata Y."/>
            <person name="Shimada H."/>
            <person name="Shimada K."/>
            <person name="Silva D."/>
            <person name="Sinclair B."/>
            <person name="Sperling S."/>
            <person name="Stupka E."/>
            <person name="Sugiura K."/>
            <person name="Sultana R."/>
            <person name="Takenaka Y."/>
            <person name="Taki K."/>
            <person name="Tammoja K."/>
            <person name="Tan S.L."/>
            <person name="Tang S."/>
            <person name="Taylor M.S."/>
            <person name="Tegner J."/>
            <person name="Teichmann S.A."/>
            <person name="Ueda H.R."/>
            <person name="van Nimwegen E."/>
            <person name="Verardo R."/>
            <person name="Wei C.L."/>
            <person name="Yagi K."/>
            <person name="Yamanishi H."/>
            <person name="Zabarovsky E."/>
            <person name="Zhu S."/>
            <person name="Zimmer A."/>
            <person name="Hide W."/>
            <person name="Bult C."/>
            <person name="Grimmond S.M."/>
            <person name="Teasdale R.D."/>
            <person name="Liu E.T."/>
            <person name="Brusic V."/>
            <person name="Quackenbush J."/>
            <person name="Wahlestedt C."/>
            <person name="Mattick J.S."/>
            <person name="Hume D.A."/>
            <person name="Kai C."/>
            <person name="Sasaki D."/>
            <person name="Tomaru Y."/>
            <person name="Fukuda S."/>
            <person name="Kanamori-Katayama M."/>
            <person name="Suzuki M."/>
            <person name="Aoki J."/>
            <person name="Arakawa T."/>
            <person name="Iida J."/>
            <person name="Imamura K."/>
            <person name="Itoh M."/>
            <person name="Kato T."/>
            <person name="Kawaji H."/>
            <person name="Kawagashira N."/>
            <person name="Kawashima T."/>
            <person name="Kojima M."/>
            <person name="Kondo S."/>
            <person name="Konno H."/>
            <person name="Nakano K."/>
            <person name="Ninomiya N."/>
            <person name="Nishio T."/>
            <person name="Okada M."/>
            <person name="Plessy C."/>
            <person name="Shibata K."/>
            <person name="Shiraki T."/>
            <person name="Suzuki S."/>
            <person name="Tagami M."/>
            <person name="Waki K."/>
            <person name="Watahiki A."/>
            <person name="Okamura-Oho Y."/>
            <person name="Suzuki H."/>
            <person name="Kawai J."/>
            <person name="Hayashizaki Y."/>
        </authorList>
    </citation>
    <scope>NUCLEOTIDE SEQUENCE [LARGE SCALE MRNA]</scope>
    <source>
        <strain>C57BL/6J</strain>
        <tissue>Bone marrow</tissue>
        <tissue>Mammary gland</tissue>
    </source>
</reference>
<reference key="2">
    <citation type="journal article" date="2004" name="Genome Res.">
        <title>The status, quality, and expansion of the NIH full-length cDNA project: the Mammalian Gene Collection (MGC).</title>
        <authorList>
            <consortium name="The MGC Project Team"/>
        </authorList>
    </citation>
    <scope>NUCLEOTIDE SEQUENCE [LARGE SCALE MRNA]</scope>
    <source>
        <strain>FVB/N</strain>
        <tissue>Liver</tissue>
    </source>
</reference>
<reference key="3">
    <citation type="journal article" date="2010" name="Cell">
        <title>A tissue-specific atlas of mouse protein phosphorylation and expression.</title>
        <authorList>
            <person name="Huttlin E.L."/>
            <person name="Jedrychowski M.P."/>
            <person name="Elias J.E."/>
            <person name="Goswami T."/>
            <person name="Rad R."/>
            <person name="Beausoleil S.A."/>
            <person name="Villen J."/>
            <person name="Haas W."/>
            <person name="Sowa M.E."/>
            <person name="Gygi S.P."/>
        </authorList>
    </citation>
    <scope>IDENTIFICATION BY MASS SPECTROMETRY [LARGE SCALE ANALYSIS]</scope>
    <source>
        <tissue>Brain</tissue>
        <tissue>Heart</tissue>
        <tissue>Kidney</tissue>
        <tissue>Liver</tissue>
        <tissue>Lung</tissue>
        <tissue>Pancreas</tissue>
        <tissue>Spleen</tissue>
        <tissue>Testis</tissue>
    </source>
</reference>
<evidence type="ECO:0000250" key="1"/>
<evidence type="ECO:0000255" key="2">
    <source>
        <dbReference type="PROSITE-ProRule" id="PRU00646"/>
    </source>
</evidence>
<evidence type="ECO:0000256" key="3">
    <source>
        <dbReference type="SAM" id="MobiDB-lite"/>
    </source>
</evidence>
<evidence type="ECO:0000305" key="4"/>
<organism>
    <name type="scientific">Mus musculus</name>
    <name type="common">Mouse</name>
    <dbReference type="NCBI Taxonomy" id="10090"/>
    <lineage>
        <taxon>Eukaryota</taxon>
        <taxon>Metazoa</taxon>
        <taxon>Chordata</taxon>
        <taxon>Craniata</taxon>
        <taxon>Vertebrata</taxon>
        <taxon>Euteleostomi</taxon>
        <taxon>Mammalia</taxon>
        <taxon>Eutheria</taxon>
        <taxon>Euarchontoglires</taxon>
        <taxon>Glires</taxon>
        <taxon>Rodentia</taxon>
        <taxon>Myomorpha</taxon>
        <taxon>Muroidea</taxon>
        <taxon>Muridae</taxon>
        <taxon>Murinae</taxon>
        <taxon>Mus</taxon>
        <taxon>Mus</taxon>
    </lineage>
</organism>
<comment type="function">
    <text evidence="1">Component of the ESCRT-I complex, a regulator of vesicular trafficking process. Required for the sorting of endocytic ubiquitinated cargos into multivesicular bodies. May be involved in cell growth and differentiation (By similarity).</text>
</comment>
<comment type="subunit">
    <text evidence="1">Component of the ESCRT-I complex (endosomal sorting complex required for transport I) which consists of TSG101, VPS28, a VPS37 protein (VPS37A to -D) and MVB12A or MVB12B in a 1:1:1:1 stoichiometry. Interacts with TSG101, VPS28, MVB12A and MVB12B. Component of the ESCRT-I complex (endosomal sorting complex required for transport I) which consists of TSG101, VPS28, a VPS37 protein (VPS37A to -D) and UBAP1 in a 1:1:1:1 stoichiometry. Interacts with CEP55. Interacts with IST1 (By similarity).</text>
</comment>
<comment type="subcellular location">
    <subcellularLocation>
        <location evidence="1">Late endosome membrane</location>
        <topology evidence="1">Peripheral membrane protein</topology>
    </subcellularLocation>
    <text evidence="1">Recruited to the endosomal membrane in a VPS4A-dependent fashion.</text>
</comment>
<comment type="similarity">
    <text evidence="4">Belongs to the VPS37 family.</text>
</comment>
<dbReference type="EMBL" id="AK149893">
    <property type="protein sequence ID" value="BAE29150.1"/>
    <property type="molecule type" value="mRNA"/>
</dbReference>
<dbReference type="EMBL" id="AK166359">
    <property type="protein sequence ID" value="BAE38730.1"/>
    <property type="molecule type" value="mRNA"/>
</dbReference>
<dbReference type="EMBL" id="BC026744">
    <property type="protein sequence ID" value="AAH26744.1"/>
    <property type="molecule type" value="mRNA"/>
</dbReference>
<dbReference type="CCDS" id="CCDS19670.1"/>
<dbReference type="RefSeq" id="NP_808544.1">
    <property type="nucleotide sequence ID" value="NM_177876.4"/>
</dbReference>
<dbReference type="SMR" id="Q8R0J7"/>
<dbReference type="BioGRID" id="236921">
    <property type="interactions" value="6"/>
</dbReference>
<dbReference type="FunCoup" id="Q8R0J7">
    <property type="interactions" value="1560"/>
</dbReference>
<dbReference type="STRING" id="10090.ENSMUSP00000047980"/>
<dbReference type="iPTMnet" id="Q8R0J7"/>
<dbReference type="PhosphoSitePlus" id="Q8R0J7"/>
<dbReference type="PaxDb" id="10090-ENSMUSP00000047980"/>
<dbReference type="PeptideAtlas" id="Q8R0J7"/>
<dbReference type="ProteomicsDB" id="300177"/>
<dbReference type="Pumba" id="Q8R0J7"/>
<dbReference type="Antibodypedia" id="52311">
    <property type="antibodies" value="74 antibodies from 18 providers"/>
</dbReference>
<dbReference type="Ensembl" id="ENSMUST00000040967.9">
    <property type="protein sequence ID" value="ENSMUSP00000047980.8"/>
    <property type="gene ID" value="ENSMUSG00000066278.7"/>
</dbReference>
<dbReference type="GeneID" id="330192"/>
<dbReference type="KEGG" id="mmu:330192"/>
<dbReference type="UCSC" id="uc008zot.1">
    <property type="organism name" value="mouse"/>
</dbReference>
<dbReference type="AGR" id="MGI:1916724"/>
<dbReference type="CTD" id="79720"/>
<dbReference type="MGI" id="MGI:1916724">
    <property type="gene designation" value="Vps37b"/>
</dbReference>
<dbReference type="VEuPathDB" id="HostDB:ENSMUSG00000066278"/>
<dbReference type="eggNOG" id="KOG3270">
    <property type="taxonomic scope" value="Eukaryota"/>
</dbReference>
<dbReference type="GeneTree" id="ENSGT00950000183012"/>
<dbReference type="HOGENOM" id="CLU_067118_1_0_1"/>
<dbReference type="InParanoid" id="Q8R0J7"/>
<dbReference type="OMA" id="KFSAYTM"/>
<dbReference type="OrthoDB" id="10004364at2759"/>
<dbReference type="PhylomeDB" id="Q8R0J7"/>
<dbReference type="TreeFam" id="TF321840"/>
<dbReference type="Reactome" id="R-MMU-917729">
    <property type="pathway name" value="Endosomal Sorting Complex Required For Transport (ESCRT)"/>
</dbReference>
<dbReference type="BioGRID-ORCS" id="330192">
    <property type="hits" value="1 hit in 76 CRISPR screens"/>
</dbReference>
<dbReference type="ChiTaRS" id="Vps37b">
    <property type="organism name" value="mouse"/>
</dbReference>
<dbReference type="PRO" id="PR:Q8R0J7"/>
<dbReference type="Proteomes" id="UP000000589">
    <property type="component" value="Chromosome 5"/>
</dbReference>
<dbReference type="RNAct" id="Q8R0J7">
    <property type="molecule type" value="protein"/>
</dbReference>
<dbReference type="Bgee" id="ENSMUSG00000066278">
    <property type="expression patterns" value="Expressed in embryonic brain and 251 other cell types or tissues"/>
</dbReference>
<dbReference type="GO" id="GO:0000813">
    <property type="term" value="C:ESCRT I complex"/>
    <property type="evidence" value="ECO:0000250"/>
    <property type="project" value="UniProtKB"/>
</dbReference>
<dbReference type="GO" id="GO:0031902">
    <property type="term" value="C:late endosome membrane"/>
    <property type="evidence" value="ECO:0007669"/>
    <property type="project" value="UniProtKB-SubCell"/>
</dbReference>
<dbReference type="GO" id="GO:0030496">
    <property type="term" value="C:midbody"/>
    <property type="evidence" value="ECO:0007669"/>
    <property type="project" value="Ensembl"/>
</dbReference>
<dbReference type="GO" id="GO:0005886">
    <property type="term" value="C:plasma membrane"/>
    <property type="evidence" value="ECO:0007669"/>
    <property type="project" value="Ensembl"/>
</dbReference>
<dbReference type="GO" id="GO:0048306">
    <property type="term" value="F:calcium-dependent protein binding"/>
    <property type="evidence" value="ECO:0007669"/>
    <property type="project" value="Ensembl"/>
</dbReference>
<dbReference type="GO" id="GO:0009056">
    <property type="term" value="P:catabolic process"/>
    <property type="evidence" value="ECO:0007669"/>
    <property type="project" value="UniProtKB-ARBA"/>
</dbReference>
<dbReference type="GO" id="GO:1903774">
    <property type="term" value="P:positive regulation of viral budding via host ESCRT complex"/>
    <property type="evidence" value="ECO:0007669"/>
    <property type="project" value="Ensembl"/>
</dbReference>
<dbReference type="GO" id="GO:0015031">
    <property type="term" value="P:protein transport"/>
    <property type="evidence" value="ECO:0007669"/>
    <property type="project" value="UniProtKB-KW"/>
</dbReference>
<dbReference type="GO" id="GO:0019076">
    <property type="term" value="P:viral release from host cell"/>
    <property type="evidence" value="ECO:0007669"/>
    <property type="project" value="Ensembl"/>
</dbReference>
<dbReference type="FunFam" id="1.10.287.660:FF:000003">
    <property type="entry name" value="vacuolar protein sorting-associated protein 37B"/>
    <property type="match status" value="1"/>
</dbReference>
<dbReference type="Gene3D" id="1.10.287.660">
    <property type="entry name" value="Helix hairpin bin"/>
    <property type="match status" value="1"/>
</dbReference>
<dbReference type="InterPro" id="IPR037202">
    <property type="entry name" value="ESCRT_assembly_dom"/>
</dbReference>
<dbReference type="InterPro" id="IPR029012">
    <property type="entry name" value="Helix_hairpin_bin_sf"/>
</dbReference>
<dbReference type="InterPro" id="IPR009851">
    <property type="entry name" value="Mod_r"/>
</dbReference>
<dbReference type="PANTHER" id="PTHR13678">
    <property type="entry name" value="VACUOLAR PROTEIN SORTING-ASSOCIATED PROTEIN 37"/>
    <property type="match status" value="1"/>
</dbReference>
<dbReference type="PANTHER" id="PTHR13678:SF9">
    <property type="entry name" value="VACUOLAR PROTEIN SORTING-ASSOCIATED PROTEIN 37B"/>
    <property type="match status" value="1"/>
</dbReference>
<dbReference type="Pfam" id="PF07200">
    <property type="entry name" value="Mod_r"/>
    <property type="match status" value="1"/>
</dbReference>
<dbReference type="SUPFAM" id="SSF140111">
    <property type="entry name" value="Endosomal sorting complex assembly domain"/>
    <property type="match status" value="1"/>
</dbReference>
<dbReference type="PROSITE" id="PS51314">
    <property type="entry name" value="VPS37_C"/>
    <property type="match status" value="1"/>
</dbReference>
<protein>
    <recommendedName>
        <fullName>Vacuolar protein sorting-associated protein 37B</fullName>
        <shortName>Vps37B</shortName>
    </recommendedName>
    <alternativeName>
        <fullName>ESCRT-I complex subunit VPS37B</fullName>
    </alternativeName>
</protein>
<keyword id="KW-0967">Endosome</keyword>
<keyword id="KW-0472">Membrane</keyword>
<keyword id="KW-0653">Protein transport</keyword>
<keyword id="KW-1185">Reference proteome</keyword>
<keyword id="KW-0813">Transport</keyword>
<sequence length="285" mass="31056">MAGAVSEARFAGLSLMQLHELLEDDAQLGDMVRGMEEAQTVQLNKEMTLASNRSLAEGNLLYQPQLDAQKARLTQKYQELQVLFEAYQIKKTKLDKQSNNASLETLLALLQAEGAKIEEDTENMAEKFLDGELPLDSFIDVYQSKRKLAHMRRVKVEKLQELVLKGQRHPQAGAPPPPRVPEPSPATALPYPSLEATGLPSVVPRRIPPPPPPVPAGHVATPFAAAMGSGQVSAYPGLQCPPLPPRVGLPSQQGFSAQLVSPYPPALPQRPPPRMAPHQPGFILQ</sequence>